<reference key="1">
    <citation type="journal article" date="1999" name="Genetics">
        <title>Divergence of the hyperthermophilic archaea Pyrococcus furiosus and P. horikoshii inferred from complete genomic sequences.</title>
        <authorList>
            <person name="Maeder D.L."/>
            <person name="Weiss R.B."/>
            <person name="Dunn D.M."/>
            <person name="Cherry J.L."/>
            <person name="Gonzalez J.M."/>
            <person name="DiRuggiero J."/>
            <person name="Robb F.T."/>
        </authorList>
    </citation>
    <scope>NUCLEOTIDE SEQUENCE [LARGE SCALE GENOMIC DNA]</scope>
    <source>
        <strain>ATCC 43587 / DSM 3638 / JCM 8422 / Vc1</strain>
    </source>
</reference>
<feature type="chain" id="PRO_0000124866" description="Prefoldin subunit beta">
    <location>
        <begin position="1"/>
        <end position="117"/>
    </location>
</feature>
<sequence length="117" mass="13332">MQNIPPQVQAMLGQLESYQQQLQLVIQQKQKVQADLNEAKKALEEIEKLTDDAVIYKTVGTLIVKTTKEKALQELKEKVETLEVRLNALNRQEQKINEKIKELTQKIQAALRPPTAG</sequence>
<accession>Q8U3S3</accession>
<evidence type="ECO:0000255" key="1">
    <source>
        <dbReference type="HAMAP-Rule" id="MF_00307"/>
    </source>
</evidence>
<evidence type="ECO:0000305" key="2"/>
<organism>
    <name type="scientific">Pyrococcus furiosus (strain ATCC 43587 / DSM 3638 / JCM 8422 / Vc1)</name>
    <dbReference type="NCBI Taxonomy" id="186497"/>
    <lineage>
        <taxon>Archaea</taxon>
        <taxon>Methanobacteriati</taxon>
        <taxon>Methanobacteriota</taxon>
        <taxon>Thermococci</taxon>
        <taxon>Thermococcales</taxon>
        <taxon>Thermococcaceae</taxon>
        <taxon>Pyrococcus</taxon>
    </lineage>
</organism>
<gene>
    <name evidence="1" type="primary">pfdB</name>
    <name type="ordered locus">PF0382</name>
</gene>
<name>PFDB_PYRFU</name>
<proteinExistence type="inferred from homology"/>
<protein>
    <recommendedName>
        <fullName evidence="1">Prefoldin subunit beta</fullName>
    </recommendedName>
    <alternativeName>
        <fullName evidence="1">GimC subunit beta</fullName>
    </alternativeName>
</protein>
<keyword id="KW-0143">Chaperone</keyword>
<keyword id="KW-0963">Cytoplasm</keyword>
<keyword id="KW-1185">Reference proteome</keyword>
<dbReference type="EMBL" id="AE009950">
    <property type="protein sequence ID" value="AAL80506.1"/>
    <property type="status" value="ALT_INIT"/>
    <property type="molecule type" value="Genomic_DNA"/>
</dbReference>
<dbReference type="RefSeq" id="WP_014835119.1">
    <property type="nucleotide sequence ID" value="NZ_CP023154.1"/>
</dbReference>
<dbReference type="SMR" id="Q8U3S3"/>
<dbReference type="STRING" id="186497.PF0382"/>
<dbReference type="PaxDb" id="186497-PF0382"/>
<dbReference type="KEGG" id="pfu:PF0382"/>
<dbReference type="PATRIC" id="fig|186497.12.peg.397"/>
<dbReference type="eggNOG" id="arCOG01342">
    <property type="taxonomic scope" value="Archaea"/>
</dbReference>
<dbReference type="HOGENOM" id="CLU_131909_1_1_2"/>
<dbReference type="OrthoDB" id="86066at2157"/>
<dbReference type="PhylomeDB" id="Q8U3S3"/>
<dbReference type="Proteomes" id="UP000001013">
    <property type="component" value="Chromosome"/>
</dbReference>
<dbReference type="GO" id="GO:0005737">
    <property type="term" value="C:cytoplasm"/>
    <property type="evidence" value="ECO:0007669"/>
    <property type="project" value="UniProtKB-SubCell"/>
</dbReference>
<dbReference type="GO" id="GO:0016272">
    <property type="term" value="C:prefoldin complex"/>
    <property type="evidence" value="ECO:0007669"/>
    <property type="project" value="UniProtKB-UniRule"/>
</dbReference>
<dbReference type="GO" id="GO:0044183">
    <property type="term" value="F:protein folding chaperone"/>
    <property type="evidence" value="ECO:0007669"/>
    <property type="project" value="TreeGrafter"/>
</dbReference>
<dbReference type="GO" id="GO:0051082">
    <property type="term" value="F:unfolded protein binding"/>
    <property type="evidence" value="ECO:0007669"/>
    <property type="project" value="UniProtKB-UniRule"/>
</dbReference>
<dbReference type="CDD" id="cd23162">
    <property type="entry name" value="Prefoldin_beta_GimC"/>
    <property type="match status" value="1"/>
</dbReference>
<dbReference type="Gene3D" id="1.10.287.370">
    <property type="match status" value="1"/>
</dbReference>
<dbReference type="HAMAP" id="MF_00307">
    <property type="entry name" value="PfdB"/>
    <property type="match status" value="1"/>
</dbReference>
<dbReference type="InterPro" id="IPR002777">
    <property type="entry name" value="PFD_beta-like"/>
</dbReference>
<dbReference type="InterPro" id="IPR012713">
    <property type="entry name" value="PfdB"/>
</dbReference>
<dbReference type="InterPro" id="IPR009053">
    <property type="entry name" value="Prefoldin"/>
</dbReference>
<dbReference type="NCBIfam" id="TIGR02338">
    <property type="entry name" value="gimC_beta"/>
    <property type="match status" value="1"/>
</dbReference>
<dbReference type="PANTHER" id="PTHR20903:SF0">
    <property type="entry name" value="PREFOLDIN SUBUNIT 1"/>
    <property type="match status" value="1"/>
</dbReference>
<dbReference type="PANTHER" id="PTHR20903">
    <property type="entry name" value="PREFOLDIN SUBUNIT 1-RELATED"/>
    <property type="match status" value="1"/>
</dbReference>
<dbReference type="Pfam" id="PF01920">
    <property type="entry name" value="Prefoldin_2"/>
    <property type="match status" value="1"/>
</dbReference>
<dbReference type="SUPFAM" id="SSF46579">
    <property type="entry name" value="Prefoldin"/>
    <property type="match status" value="1"/>
</dbReference>
<comment type="function">
    <text evidence="1">Molecular chaperone capable of stabilizing a range of proteins. Seems to fulfill an ATP-independent, HSP70-like function in archaeal de novo protein folding.</text>
</comment>
<comment type="subunit">
    <text evidence="1">Heterohexamer of two alpha and four beta subunits.</text>
</comment>
<comment type="subcellular location">
    <subcellularLocation>
        <location evidence="1">Cytoplasm</location>
    </subcellularLocation>
</comment>
<comment type="similarity">
    <text evidence="1">Belongs to the prefoldin subunit beta family.</text>
</comment>
<comment type="sequence caution" evidence="2">
    <conflict type="erroneous initiation">
        <sequence resource="EMBL-CDS" id="AAL80506"/>
    </conflict>
</comment>